<protein>
    <recommendedName>
        <fullName evidence="1">Thymidylate kinase</fullName>
        <ecNumber evidence="1">2.7.4.9</ecNumber>
    </recommendedName>
    <alternativeName>
        <fullName evidence="1">dTMP kinase</fullName>
    </alternativeName>
</protein>
<evidence type="ECO:0000255" key="1">
    <source>
        <dbReference type="HAMAP-Rule" id="MF_00165"/>
    </source>
</evidence>
<sequence>MSGLFITFEGPEGAGKTTVLQEMKEILSAEGLPVTATREPGGIDIAEQIREVILNKNNTLMDAKTEALLYAAARRQHLAEKVQPALKEGRIVLCDRFIDSSLAYQGYARGLGIDEVLSINQFAIGDTMPDVTIYFSIEPEEGLKRITSNDSREKNRLDLEALHFHTKVREGYQKVMQRFPERFHTIDASKKKELVIQDALQVINEALKKIQL</sequence>
<accession>A7Z0F1</accession>
<comment type="function">
    <text evidence="1">Phosphorylation of dTMP to form dTDP in both de novo and salvage pathways of dTTP synthesis.</text>
</comment>
<comment type="catalytic activity">
    <reaction evidence="1">
        <text>dTMP + ATP = dTDP + ADP</text>
        <dbReference type="Rhea" id="RHEA:13517"/>
        <dbReference type="ChEBI" id="CHEBI:30616"/>
        <dbReference type="ChEBI" id="CHEBI:58369"/>
        <dbReference type="ChEBI" id="CHEBI:63528"/>
        <dbReference type="ChEBI" id="CHEBI:456216"/>
        <dbReference type="EC" id="2.7.4.9"/>
    </reaction>
</comment>
<comment type="similarity">
    <text evidence="1">Belongs to the thymidylate kinase family.</text>
</comment>
<feature type="chain" id="PRO_1000023146" description="Thymidylate kinase">
    <location>
        <begin position="1"/>
        <end position="212"/>
    </location>
</feature>
<feature type="binding site" evidence="1">
    <location>
        <begin position="10"/>
        <end position="17"/>
    </location>
    <ligand>
        <name>ATP</name>
        <dbReference type="ChEBI" id="CHEBI:30616"/>
    </ligand>
</feature>
<organism>
    <name type="scientific">Bacillus velezensis (strain DSM 23117 / BGSC 10A6 / LMG 26770 / FZB42)</name>
    <name type="common">Bacillus amyloliquefaciens subsp. plantarum</name>
    <dbReference type="NCBI Taxonomy" id="326423"/>
    <lineage>
        <taxon>Bacteria</taxon>
        <taxon>Bacillati</taxon>
        <taxon>Bacillota</taxon>
        <taxon>Bacilli</taxon>
        <taxon>Bacillales</taxon>
        <taxon>Bacillaceae</taxon>
        <taxon>Bacillus</taxon>
        <taxon>Bacillus amyloliquefaciens group</taxon>
    </lineage>
</organism>
<gene>
    <name evidence="1" type="primary">tmk</name>
    <name type="ordered locus">RBAM_000370</name>
</gene>
<proteinExistence type="inferred from homology"/>
<keyword id="KW-0067">ATP-binding</keyword>
<keyword id="KW-0418">Kinase</keyword>
<keyword id="KW-0545">Nucleotide biosynthesis</keyword>
<keyword id="KW-0547">Nucleotide-binding</keyword>
<keyword id="KW-0808">Transferase</keyword>
<name>KTHY_BACVZ</name>
<reference key="1">
    <citation type="journal article" date="2007" name="Nat. Biotechnol.">
        <title>Comparative analysis of the complete genome sequence of the plant growth-promoting bacterium Bacillus amyloliquefaciens FZB42.</title>
        <authorList>
            <person name="Chen X.H."/>
            <person name="Koumoutsi A."/>
            <person name="Scholz R."/>
            <person name="Eisenreich A."/>
            <person name="Schneider K."/>
            <person name="Heinemeyer I."/>
            <person name="Morgenstern B."/>
            <person name="Voss B."/>
            <person name="Hess W.R."/>
            <person name="Reva O."/>
            <person name="Junge H."/>
            <person name="Voigt B."/>
            <person name="Jungblut P.R."/>
            <person name="Vater J."/>
            <person name="Suessmuth R."/>
            <person name="Liesegang H."/>
            <person name="Strittmatter A."/>
            <person name="Gottschalk G."/>
            <person name="Borriss R."/>
        </authorList>
    </citation>
    <scope>NUCLEOTIDE SEQUENCE [LARGE SCALE GENOMIC DNA]</scope>
    <source>
        <strain>DSM 23117 / BGSC 10A6 / LMG 26770 / FZB42</strain>
    </source>
</reference>
<dbReference type="EC" id="2.7.4.9" evidence="1"/>
<dbReference type="EMBL" id="CP000560">
    <property type="protein sequence ID" value="ABS72477.1"/>
    <property type="molecule type" value="Genomic_DNA"/>
</dbReference>
<dbReference type="RefSeq" id="WP_007615155.1">
    <property type="nucleotide sequence ID" value="NC_009725.2"/>
</dbReference>
<dbReference type="SMR" id="A7Z0F1"/>
<dbReference type="GeneID" id="93079175"/>
<dbReference type="KEGG" id="bay:RBAM_000370"/>
<dbReference type="HOGENOM" id="CLU_049131_0_2_9"/>
<dbReference type="Proteomes" id="UP000001120">
    <property type="component" value="Chromosome"/>
</dbReference>
<dbReference type="GO" id="GO:0005829">
    <property type="term" value="C:cytosol"/>
    <property type="evidence" value="ECO:0007669"/>
    <property type="project" value="TreeGrafter"/>
</dbReference>
<dbReference type="GO" id="GO:0005524">
    <property type="term" value="F:ATP binding"/>
    <property type="evidence" value="ECO:0007669"/>
    <property type="project" value="UniProtKB-UniRule"/>
</dbReference>
<dbReference type="GO" id="GO:0004798">
    <property type="term" value="F:dTMP kinase activity"/>
    <property type="evidence" value="ECO:0007669"/>
    <property type="project" value="UniProtKB-UniRule"/>
</dbReference>
<dbReference type="GO" id="GO:0006233">
    <property type="term" value="P:dTDP biosynthetic process"/>
    <property type="evidence" value="ECO:0007669"/>
    <property type="project" value="InterPro"/>
</dbReference>
<dbReference type="GO" id="GO:0006235">
    <property type="term" value="P:dTTP biosynthetic process"/>
    <property type="evidence" value="ECO:0007669"/>
    <property type="project" value="UniProtKB-UniRule"/>
</dbReference>
<dbReference type="GO" id="GO:0006227">
    <property type="term" value="P:dUDP biosynthetic process"/>
    <property type="evidence" value="ECO:0007669"/>
    <property type="project" value="TreeGrafter"/>
</dbReference>
<dbReference type="CDD" id="cd01672">
    <property type="entry name" value="TMPK"/>
    <property type="match status" value="1"/>
</dbReference>
<dbReference type="FunFam" id="3.40.50.300:FF:000225">
    <property type="entry name" value="Thymidylate kinase"/>
    <property type="match status" value="1"/>
</dbReference>
<dbReference type="Gene3D" id="3.40.50.300">
    <property type="entry name" value="P-loop containing nucleotide triphosphate hydrolases"/>
    <property type="match status" value="1"/>
</dbReference>
<dbReference type="HAMAP" id="MF_00165">
    <property type="entry name" value="Thymidylate_kinase"/>
    <property type="match status" value="1"/>
</dbReference>
<dbReference type="InterPro" id="IPR027417">
    <property type="entry name" value="P-loop_NTPase"/>
</dbReference>
<dbReference type="InterPro" id="IPR039430">
    <property type="entry name" value="Thymidylate_kin-like_dom"/>
</dbReference>
<dbReference type="InterPro" id="IPR018095">
    <property type="entry name" value="Thymidylate_kin_CS"/>
</dbReference>
<dbReference type="InterPro" id="IPR018094">
    <property type="entry name" value="Thymidylate_kinase"/>
</dbReference>
<dbReference type="NCBIfam" id="TIGR00041">
    <property type="entry name" value="DTMP_kinase"/>
    <property type="match status" value="1"/>
</dbReference>
<dbReference type="PANTHER" id="PTHR10344">
    <property type="entry name" value="THYMIDYLATE KINASE"/>
    <property type="match status" value="1"/>
</dbReference>
<dbReference type="PANTHER" id="PTHR10344:SF4">
    <property type="entry name" value="UMP-CMP KINASE 2, MITOCHONDRIAL"/>
    <property type="match status" value="1"/>
</dbReference>
<dbReference type="Pfam" id="PF02223">
    <property type="entry name" value="Thymidylate_kin"/>
    <property type="match status" value="1"/>
</dbReference>
<dbReference type="SUPFAM" id="SSF52540">
    <property type="entry name" value="P-loop containing nucleoside triphosphate hydrolases"/>
    <property type="match status" value="1"/>
</dbReference>
<dbReference type="PROSITE" id="PS01331">
    <property type="entry name" value="THYMIDYLATE_KINASE"/>
    <property type="match status" value="1"/>
</dbReference>